<comment type="function">
    <text evidence="2">This is one of the proteins that bind and probably mediate the attachment of the 5S RNA into the large ribosomal subunit, where it forms part of the central protuberance. In the 70S ribosome it contacts protein S13 of the 30S subunit (bridge B1b), connecting the 2 subunits; this bridge is implicated in subunit movement. Contacts the P site tRNA; the 5S rRNA and some of its associated proteins might help stabilize positioning of ribosome-bound tRNAs.</text>
</comment>
<comment type="subunit">
    <text evidence="2">Part of the 50S ribosomal subunit; part of the 5S rRNA/L5/L18/L25 subcomplex. Contacts the 5S rRNA and the P site tRNA. Forms a bridge to the 30S subunit in the 70S ribosome.</text>
</comment>
<comment type="similarity">
    <text evidence="2">Belongs to the universal ribosomal protein uL5 family.</text>
</comment>
<dbReference type="EMBL" id="AE005674">
    <property type="protein sequence ID" value="AAN44803.1"/>
    <property type="molecule type" value="Genomic_DNA"/>
</dbReference>
<dbReference type="EMBL" id="AE014073">
    <property type="protein sequence ID" value="AAP19373.1"/>
    <property type="molecule type" value="Genomic_DNA"/>
</dbReference>
<dbReference type="RefSeq" id="NP_709096.1">
    <property type="nucleotide sequence ID" value="NC_004337.2"/>
</dbReference>
<dbReference type="RefSeq" id="WP_001096199.1">
    <property type="nucleotide sequence ID" value="NZ_CP123365.1"/>
</dbReference>
<dbReference type="SMR" id="Q83PY9"/>
<dbReference type="STRING" id="198214.SF3340"/>
<dbReference type="PaxDb" id="198214-SF3340"/>
<dbReference type="GeneID" id="1027030"/>
<dbReference type="KEGG" id="sfl:SF3340"/>
<dbReference type="KEGG" id="sfx:S4422"/>
<dbReference type="PATRIC" id="fig|198214.7.peg.3949"/>
<dbReference type="HOGENOM" id="CLU_061015_2_1_6"/>
<dbReference type="Proteomes" id="UP000001006">
    <property type="component" value="Chromosome"/>
</dbReference>
<dbReference type="Proteomes" id="UP000002673">
    <property type="component" value="Chromosome"/>
</dbReference>
<dbReference type="GO" id="GO:1990904">
    <property type="term" value="C:ribonucleoprotein complex"/>
    <property type="evidence" value="ECO:0007669"/>
    <property type="project" value="UniProtKB-KW"/>
</dbReference>
<dbReference type="GO" id="GO:0005840">
    <property type="term" value="C:ribosome"/>
    <property type="evidence" value="ECO:0007669"/>
    <property type="project" value="UniProtKB-KW"/>
</dbReference>
<dbReference type="GO" id="GO:0019843">
    <property type="term" value="F:rRNA binding"/>
    <property type="evidence" value="ECO:0007669"/>
    <property type="project" value="UniProtKB-UniRule"/>
</dbReference>
<dbReference type="GO" id="GO:0003735">
    <property type="term" value="F:structural constituent of ribosome"/>
    <property type="evidence" value="ECO:0007669"/>
    <property type="project" value="InterPro"/>
</dbReference>
<dbReference type="GO" id="GO:0000049">
    <property type="term" value="F:tRNA binding"/>
    <property type="evidence" value="ECO:0007669"/>
    <property type="project" value="UniProtKB-UniRule"/>
</dbReference>
<dbReference type="GO" id="GO:0006412">
    <property type="term" value="P:translation"/>
    <property type="evidence" value="ECO:0007669"/>
    <property type="project" value="UniProtKB-UniRule"/>
</dbReference>
<dbReference type="FunFam" id="3.30.1440.10:FF:000001">
    <property type="entry name" value="50S ribosomal protein L5"/>
    <property type="match status" value="1"/>
</dbReference>
<dbReference type="Gene3D" id="3.30.1440.10">
    <property type="match status" value="1"/>
</dbReference>
<dbReference type="HAMAP" id="MF_01333_B">
    <property type="entry name" value="Ribosomal_uL5_B"/>
    <property type="match status" value="1"/>
</dbReference>
<dbReference type="InterPro" id="IPR002132">
    <property type="entry name" value="Ribosomal_uL5"/>
</dbReference>
<dbReference type="InterPro" id="IPR020930">
    <property type="entry name" value="Ribosomal_uL5_bac-type"/>
</dbReference>
<dbReference type="InterPro" id="IPR031309">
    <property type="entry name" value="Ribosomal_uL5_C"/>
</dbReference>
<dbReference type="InterPro" id="IPR022803">
    <property type="entry name" value="Ribosomal_uL5_dom_sf"/>
</dbReference>
<dbReference type="InterPro" id="IPR031310">
    <property type="entry name" value="Ribosomal_uL5_N"/>
</dbReference>
<dbReference type="NCBIfam" id="NF000585">
    <property type="entry name" value="PRK00010.1"/>
    <property type="match status" value="1"/>
</dbReference>
<dbReference type="PANTHER" id="PTHR11994">
    <property type="entry name" value="60S RIBOSOMAL PROTEIN L11-RELATED"/>
    <property type="match status" value="1"/>
</dbReference>
<dbReference type="Pfam" id="PF00281">
    <property type="entry name" value="Ribosomal_L5"/>
    <property type="match status" value="1"/>
</dbReference>
<dbReference type="Pfam" id="PF00673">
    <property type="entry name" value="Ribosomal_L5_C"/>
    <property type="match status" value="1"/>
</dbReference>
<dbReference type="PIRSF" id="PIRSF002161">
    <property type="entry name" value="Ribosomal_L5"/>
    <property type="match status" value="1"/>
</dbReference>
<dbReference type="SUPFAM" id="SSF55282">
    <property type="entry name" value="RL5-like"/>
    <property type="match status" value="1"/>
</dbReference>
<name>RL5_SHIFL</name>
<gene>
    <name evidence="2" type="primary">rplE</name>
    <name type="ordered locus">SF3340</name>
    <name type="ordered locus">S4422</name>
</gene>
<protein>
    <recommendedName>
        <fullName evidence="2">Large ribosomal subunit protein uL5</fullName>
    </recommendedName>
    <alternativeName>
        <fullName evidence="3">50S ribosomal protein L5</fullName>
    </alternativeName>
</protein>
<evidence type="ECO:0000250" key="1"/>
<evidence type="ECO:0000255" key="2">
    <source>
        <dbReference type="HAMAP-Rule" id="MF_01333"/>
    </source>
</evidence>
<evidence type="ECO:0000305" key="3"/>
<reference key="1">
    <citation type="journal article" date="2002" name="Nucleic Acids Res.">
        <title>Genome sequence of Shigella flexneri 2a: insights into pathogenicity through comparison with genomes of Escherichia coli K12 and O157.</title>
        <authorList>
            <person name="Jin Q."/>
            <person name="Yuan Z."/>
            <person name="Xu J."/>
            <person name="Wang Y."/>
            <person name="Shen Y."/>
            <person name="Lu W."/>
            <person name="Wang J."/>
            <person name="Liu H."/>
            <person name="Yang J."/>
            <person name="Yang F."/>
            <person name="Zhang X."/>
            <person name="Zhang J."/>
            <person name="Yang G."/>
            <person name="Wu H."/>
            <person name="Qu D."/>
            <person name="Dong J."/>
            <person name="Sun L."/>
            <person name="Xue Y."/>
            <person name="Zhao A."/>
            <person name="Gao Y."/>
            <person name="Zhu J."/>
            <person name="Kan B."/>
            <person name="Ding K."/>
            <person name="Chen S."/>
            <person name="Cheng H."/>
            <person name="Yao Z."/>
            <person name="He B."/>
            <person name="Chen R."/>
            <person name="Ma D."/>
            <person name="Qiang B."/>
            <person name="Wen Y."/>
            <person name="Hou Y."/>
            <person name="Yu J."/>
        </authorList>
    </citation>
    <scope>NUCLEOTIDE SEQUENCE [LARGE SCALE GENOMIC DNA]</scope>
    <source>
        <strain>301 / Serotype 2a</strain>
    </source>
</reference>
<reference key="2">
    <citation type="journal article" date="2003" name="Infect. Immun.">
        <title>Complete genome sequence and comparative genomics of Shigella flexneri serotype 2a strain 2457T.</title>
        <authorList>
            <person name="Wei J."/>
            <person name="Goldberg M.B."/>
            <person name="Burland V."/>
            <person name="Venkatesan M.M."/>
            <person name="Deng W."/>
            <person name="Fournier G."/>
            <person name="Mayhew G.F."/>
            <person name="Plunkett G. III"/>
            <person name="Rose D.J."/>
            <person name="Darling A."/>
            <person name="Mau B."/>
            <person name="Perna N.T."/>
            <person name="Payne S.M."/>
            <person name="Runyen-Janecky L.J."/>
            <person name="Zhou S."/>
            <person name="Schwartz D.C."/>
            <person name="Blattner F.R."/>
        </authorList>
    </citation>
    <scope>NUCLEOTIDE SEQUENCE [LARGE SCALE GENOMIC DNA]</scope>
    <source>
        <strain>ATCC 700930 / 2457T / Serotype 2a</strain>
    </source>
</reference>
<feature type="initiator methionine" description="Removed" evidence="1">
    <location>
        <position position="1"/>
    </location>
</feature>
<feature type="chain" id="PRO_0000124984" description="Large ribosomal subunit protein uL5">
    <location>
        <begin position="2"/>
        <end position="179"/>
    </location>
</feature>
<feature type="modified residue" description="N6-acetyllysine" evidence="2">
    <location>
        <position position="3"/>
    </location>
</feature>
<feature type="sequence conflict" description="In Ref. 2; AAP19373." evidence="3" ref="2">
    <original>FSR</original>
    <variation>ISG</variation>
    <location>
        <begin position="60"/>
        <end position="62"/>
    </location>
</feature>
<feature type="sequence conflict" description="In Ref. 2; AAP19373." evidence="3" ref="2">
    <original>S</original>
    <variation>I</variation>
    <location>
        <position position="67"/>
    </location>
</feature>
<feature type="sequence conflict" description="In Ref. 2; AAP19373." evidence="3" ref="2">
    <original>F</original>
    <variation>S</variation>
    <location>
        <position position="73"/>
    </location>
</feature>
<feature type="sequence conflict" description="In Ref. 2; AAP19373." evidence="3" ref="2">
    <original>C</original>
    <variation>G</variation>
    <location>
        <position position="76"/>
    </location>
</feature>
<keyword id="KW-0007">Acetylation</keyword>
<keyword id="KW-1185">Reference proteome</keyword>
<keyword id="KW-0687">Ribonucleoprotein</keyword>
<keyword id="KW-0689">Ribosomal protein</keyword>
<keyword id="KW-0694">RNA-binding</keyword>
<keyword id="KW-0699">rRNA-binding</keyword>
<keyword id="KW-0820">tRNA-binding</keyword>
<proteinExistence type="inferred from homology"/>
<organism>
    <name type="scientific">Shigella flexneri</name>
    <dbReference type="NCBI Taxonomy" id="623"/>
    <lineage>
        <taxon>Bacteria</taxon>
        <taxon>Pseudomonadati</taxon>
        <taxon>Pseudomonadota</taxon>
        <taxon>Gammaproteobacteria</taxon>
        <taxon>Enterobacterales</taxon>
        <taxon>Enterobacteriaceae</taxon>
        <taxon>Shigella</taxon>
    </lineage>
</organism>
<sequence>MAKLHDYYKDEVVKKLMTEFNYNSVMQVPRVEKITLNMGVGEAIADKKLLDNAAADLAAFSRQKPLSTKARKFVACFKIRQGYPIGCKVTLRGERMWEFFERLITIAVPRIRDFRGLSAKSFDGRGNYSMGVREQIIFPEIDYDKVDRVRGLDITITTTAKSDEEGRALLAAFDFPFRK</sequence>
<accession>Q83PY9</accession>